<accession>A3DEE4</accession>
<proteinExistence type="inferred from homology"/>
<reference key="1">
    <citation type="submission" date="2007-02" db="EMBL/GenBank/DDBJ databases">
        <title>Complete sequence of Clostridium thermocellum ATCC 27405.</title>
        <authorList>
            <consortium name="US DOE Joint Genome Institute"/>
            <person name="Copeland A."/>
            <person name="Lucas S."/>
            <person name="Lapidus A."/>
            <person name="Barry K."/>
            <person name="Detter J.C."/>
            <person name="Glavina del Rio T."/>
            <person name="Hammon N."/>
            <person name="Israni S."/>
            <person name="Dalin E."/>
            <person name="Tice H."/>
            <person name="Pitluck S."/>
            <person name="Chertkov O."/>
            <person name="Brettin T."/>
            <person name="Bruce D."/>
            <person name="Han C."/>
            <person name="Tapia R."/>
            <person name="Gilna P."/>
            <person name="Schmutz J."/>
            <person name="Larimer F."/>
            <person name="Land M."/>
            <person name="Hauser L."/>
            <person name="Kyrpides N."/>
            <person name="Mikhailova N."/>
            <person name="Wu J.H.D."/>
            <person name="Newcomb M."/>
            <person name="Richardson P."/>
        </authorList>
    </citation>
    <scope>NUCLEOTIDE SEQUENCE [LARGE SCALE GENOMIC DNA]</scope>
    <source>
        <strain>ATCC 27405 / DSM 1237 / JCM 9322 / NBRC 103400 / NCIMB 10682 / NRRL B-4536 / VPI 7372</strain>
    </source>
</reference>
<dbReference type="EC" id="3.1.-.-" evidence="1"/>
<dbReference type="EMBL" id="CP000568">
    <property type="protein sequence ID" value="ABN52323.1"/>
    <property type="molecule type" value="Genomic_DNA"/>
</dbReference>
<dbReference type="RefSeq" id="WP_004463536.1">
    <property type="nucleotide sequence ID" value="NC_009012.1"/>
</dbReference>
<dbReference type="SMR" id="A3DEE4"/>
<dbReference type="STRING" id="203119.Cthe_1091"/>
<dbReference type="GeneID" id="35803090"/>
<dbReference type="KEGG" id="cth:Cthe_1091"/>
<dbReference type="eggNOG" id="COG1418">
    <property type="taxonomic scope" value="Bacteria"/>
</dbReference>
<dbReference type="HOGENOM" id="CLU_028328_1_0_9"/>
<dbReference type="OrthoDB" id="9803205at2"/>
<dbReference type="Proteomes" id="UP000002145">
    <property type="component" value="Chromosome"/>
</dbReference>
<dbReference type="GO" id="GO:0005886">
    <property type="term" value="C:plasma membrane"/>
    <property type="evidence" value="ECO:0007669"/>
    <property type="project" value="UniProtKB-SubCell"/>
</dbReference>
<dbReference type="GO" id="GO:0003723">
    <property type="term" value="F:RNA binding"/>
    <property type="evidence" value="ECO:0007669"/>
    <property type="project" value="UniProtKB-UniRule"/>
</dbReference>
<dbReference type="GO" id="GO:0004521">
    <property type="term" value="F:RNA endonuclease activity"/>
    <property type="evidence" value="ECO:0007669"/>
    <property type="project" value="UniProtKB-UniRule"/>
</dbReference>
<dbReference type="GO" id="GO:0006402">
    <property type="term" value="P:mRNA catabolic process"/>
    <property type="evidence" value="ECO:0007669"/>
    <property type="project" value="UniProtKB-UniRule"/>
</dbReference>
<dbReference type="CDD" id="cd00077">
    <property type="entry name" value="HDc"/>
    <property type="match status" value="1"/>
</dbReference>
<dbReference type="CDD" id="cd22431">
    <property type="entry name" value="KH-I_RNaseY"/>
    <property type="match status" value="1"/>
</dbReference>
<dbReference type="FunFam" id="1.10.3210.10:FF:000003">
    <property type="entry name" value="Ribonuclease Y"/>
    <property type="match status" value="1"/>
</dbReference>
<dbReference type="FunFam" id="3.30.1370.10:FF:000006">
    <property type="entry name" value="Ribonuclease Y"/>
    <property type="match status" value="1"/>
</dbReference>
<dbReference type="Gene3D" id="1.10.3210.10">
    <property type="entry name" value="Hypothetical protein af1432"/>
    <property type="match status" value="1"/>
</dbReference>
<dbReference type="Gene3D" id="3.30.1370.10">
    <property type="entry name" value="K Homology domain, type 1"/>
    <property type="match status" value="1"/>
</dbReference>
<dbReference type="HAMAP" id="MF_00335">
    <property type="entry name" value="RNase_Y"/>
    <property type="match status" value="1"/>
</dbReference>
<dbReference type="InterPro" id="IPR003607">
    <property type="entry name" value="HD/PDEase_dom"/>
</dbReference>
<dbReference type="InterPro" id="IPR006674">
    <property type="entry name" value="HD_domain"/>
</dbReference>
<dbReference type="InterPro" id="IPR006675">
    <property type="entry name" value="HDIG_dom"/>
</dbReference>
<dbReference type="InterPro" id="IPR004087">
    <property type="entry name" value="KH_dom"/>
</dbReference>
<dbReference type="InterPro" id="IPR004088">
    <property type="entry name" value="KH_dom_type_1"/>
</dbReference>
<dbReference type="InterPro" id="IPR036612">
    <property type="entry name" value="KH_dom_type_1_sf"/>
</dbReference>
<dbReference type="InterPro" id="IPR017705">
    <property type="entry name" value="Ribonuclease_Y"/>
</dbReference>
<dbReference type="InterPro" id="IPR022711">
    <property type="entry name" value="RNase_Y_N"/>
</dbReference>
<dbReference type="NCBIfam" id="TIGR00277">
    <property type="entry name" value="HDIG"/>
    <property type="match status" value="1"/>
</dbReference>
<dbReference type="NCBIfam" id="TIGR03319">
    <property type="entry name" value="RNase_Y"/>
    <property type="match status" value="1"/>
</dbReference>
<dbReference type="PANTHER" id="PTHR12826">
    <property type="entry name" value="RIBONUCLEASE Y"/>
    <property type="match status" value="1"/>
</dbReference>
<dbReference type="PANTHER" id="PTHR12826:SF15">
    <property type="entry name" value="RIBONUCLEASE Y"/>
    <property type="match status" value="1"/>
</dbReference>
<dbReference type="Pfam" id="PF01966">
    <property type="entry name" value="HD"/>
    <property type="match status" value="1"/>
</dbReference>
<dbReference type="Pfam" id="PF00013">
    <property type="entry name" value="KH_1"/>
    <property type="match status" value="1"/>
</dbReference>
<dbReference type="Pfam" id="PF12072">
    <property type="entry name" value="RNase_Y_N"/>
    <property type="match status" value="1"/>
</dbReference>
<dbReference type="SMART" id="SM00471">
    <property type="entry name" value="HDc"/>
    <property type="match status" value="1"/>
</dbReference>
<dbReference type="SMART" id="SM00322">
    <property type="entry name" value="KH"/>
    <property type="match status" value="1"/>
</dbReference>
<dbReference type="SUPFAM" id="SSF54791">
    <property type="entry name" value="Eukaryotic type KH-domain (KH-domain type I)"/>
    <property type="match status" value="1"/>
</dbReference>
<dbReference type="SUPFAM" id="SSF109604">
    <property type="entry name" value="HD-domain/PDEase-like"/>
    <property type="match status" value="1"/>
</dbReference>
<dbReference type="PROSITE" id="PS51831">
    <property type="entry name" value="HD"/>
    <property type="match status" value="1"/>
</dbReference>
<dbReference type="PROSITE" id="PS50084">
    <property type="entry name" value="KH_TYPE_1"/>
    <property type="match status" value="1"/>
</dbReference>
<feature type="chain" id="PRO_0000344857" description="Ribonuclease Y">
    <location>
        <begin position="1"/>
        <end position="524"/>
    </location>
</feature>
<feature type="transmembrane region" description="Helical" evidence="1">
    <location>
        <begin position="7"/>
        <end position="27"/>
    </location>
</feature>
<feature type="domain" description="KH" evidence="1">
    <location>
        <begin position="214"/>
        <end position="299"/>
    </location>
</feature>
<feature type="domain" description="HD" evidence="2">
    <location>
        <begin position="340"/>
        <end position="433"/>
    </location>
</feature>
<sequence>MCAIAYLGGLLTGIVIAIIASIIASVISYRKGIEFRKKKAEAKIGSAEQEAERIISEAQKIAEAKKREVLLEAKEEIHKSRLELDREIKERRNEIQRLERRLVQKEEALDRKVESLEQKEELLNKKTKEIQELYEQTLETQRQQVAELERISGLSVDEAKEVLLKNVENEVKHEMAILIKDIEAKAKEEAEIRAKNIIAMAIQKCAADHVSEVTVSVVPLPNDEMKGRIIGREGRNIRTLETLTGIDLIIDDTPEAVILSGFDPIRREIARITLEKLILDGRIHPARIEEMVEKARKEVENTIRQEGENATFETGVHGLHPEIVRLLGKLKFRTSYGQNVLSHSIEVARLAGLMAAELGVDVNLAKRAGLLHDIGKAVDHEVEGSHVTIGADIAKKYKESNEVVNAIASHHGDVEATSIIAVLVQAADSISAARPGARRETLESYIKRLEKLEEIANSFDGVDKCFAIQAGREIRIMVKPEDVSDSDIALIARDIVKRIENELDYPGQIKVNVIRETRYIEYAK</sequence>
<comment type="function">
    <text evidence="1">Endoribonuclease that initiates mRNA decay.</text>
</comment>
<comment type="subcellular location">
    <subcellularLocation>
        <location evidence="1">Cell membrane</location>
        <topology evidence="1">Single-pass membrane protein</topology>
    </subcellularLocation>
</comment>
<comment type="similarity">
    <text evidence="1">Belongs to the RNase Y family.</text>
</comment>
<protein>
    <recommendedName>
        <fullName evidence="1">Ribonuclease Y</fullName>
        <shortName evidence="1">RNase Y</shortName>
        <ecNumber evidence="1">3.1.-.-</ecNumber>
    </recommendedName>
</protein>
<organism>
    <name type="scientific">Acetivibrio thermocellus (strain ATCC 27405 / DSM 1237 / JCM 9322 / NBRC 103400 / NCIMB 10682 / NRRL B-4536 / VPI 7372)</name>
    <name type="common">Clostridium thermocellum</name>
    <dbReference type="NCBI Taxonomy" id="203119"/>
    <lineage>
        <taxon>Bacteria</taxon>
        <taxon>Bacillati</taxon>
        <taxon>Bacillota</taxon>
        <taxon>Clostridia</taxon>
        <taxon>Eubacteriales</taxon>
        <taxon>Oscillospiraceae</taxon>
        <taxon>Acetivibrio</taxon>
    </lineage>
</organism>
<name>RNY_ACET2</name>
<gene>
    <name evidence="1" type="primary">rny</name>
    <name type="ordered locus">Cthe_1091</name>
</gene>
<keyword id="KW-1003">Cell membrane</keyword>
<keyword id="KW-0255">Endonuclease</keyword>
<keyword id="KW-0378">Hydrolase</keyword>
<keyword id="KW-0472">Membrane</keyword>
<keyword id="KW-0540">Nuclease</keyword>
<keyword id="KW-1185">Reference proteome</keyword>
<keyword id="KW-0694">RNA-binding</keyword>
<keyword id="KW-0812">Transmembrane</keyword>
<keyword id="KW-1133">Transmembrane helix</keyword>
<evidence type="ECO:0000255" key="1">
    <source>
        <dbReference type="HAMAP-Rule" id="MF_00335"/>
    </source>
</evidence>
<evidence type="ECO:0000255" key="2">
    <source>
        <dbReference type="PROSITE-ProRule" id="PRU01175"/>
    </source>
</evidence>